<evidence type="ECO:0000255" key="1">
    <source>
        <dbReference type="HAMAP-Rule" id="MF_00169"/>
    </source>
</evidence>
<gene>
    <name evidence="1" type="primary">aroQ</name>
    <name type="ordered locus">TGRD_192</name>
</gene>
<name>AROQ_ENDTX</name>
<organism>
    <name type="scientific">Endomicrobium trichonymphae</name>
    <dbReference type="NCBI Taxonomy" id="1408204"/>
    <lineage>
        <taxon>Bacteria</taxon>
        <taxon>Pseudomonadati</taxon>
        <taxon>Elusimicrobiota</taxon>
        <taxon>Endomicrobiia</taxon>
        <taxon>Endomicrobiales</taxon>
        <taxon>Endomicrobiaceae</taxon>
        <taxon>Candidatus Endomicrobiellum</taxon>
    </lineage>
</organism>
<reference key="1">
    <citation type="journal article" date="2008" name="Proc. Natl. Acad. Sci. U.S.A.">
        <title>Complete genome of the uncultured termite group 1 bacteria in a single host protist cell.</title>
        <authorList>
            <person name="Hongoh Y."/>
            <person name="Sharma V.K."/>
            <person name="Prakash T."/>
            <person name="Noda S."/>
            <person name="Taylor T.D."/>
            <person name="Kudo T."/>
            <person name="Sakaki Y."/>
            <person name="Toyoda A."/>
            <person name="Hattori M."/>
            <person name="Ohkuma M."/>
        </authorList>
    </citation>
    <scope>NUCLEOTIDE SEQUENCE [LARGE SCALE GENOMIC DNA]</scope>
</reference>
<feature type="chain" id="PRO_1000097631" description="3-dehydroquinate dehydratase">
    <location>
        <begin position="1"/>
        <end position="143"/>
    </location>
</feature>
<feature type="active site" description="Proton acceptor" evidence="1">
    <location>
        <position position="23"/>
    </location>
</feature>
<feature type="active site" description="Proton donor" evidence="1">
    <location>
        <position position="100"/>
    </location>
</feature>
<feature type="binding site" evidence="1">
    <location>
        <position position="74"/>
    </location>
    <ligand>
        <name>substrate</name>
    </ligand>
</feature>
<feature type="binding site" evidence="1">
    <location>
        <position position="80"/>
    </location>
    <ligand>
        <name>substrate</name>
    </ligand>
</feature>
<feature type="binding site" evidence="1">
    <location>
        <position position="87"/>
    </location>
    <ligand>
        <name>substrate</name>
    </ligand>
</feature>
<feature type="binding site" evidence="1">
    <location>
        <begin position="101"/>
        <end position="102"/>
    </location>
    <ligand>
        <name>substrate</name>
    </ligand>
</feature>
<feature type="binding site" evidence="1">
    <location>
        <position position="111"/>
    </location>
    <ligand>
        <name>substrate</name>
    </ligand>
</feature>
<feature type="site" description="Transition state stabilizer" evidence="1">
    <location>
        <position position="18"/>
    </location>
</feature>
<comment type="function">
    <text evidence="1">Catalyzes a trans-dehydration via an enolate intermediate.</text>
</comment>
<comment type="catalytic activity">
    <reaction evidence="1">
        <text>3-dehydroquinate = 3-dehydroshikimate + H2O</text>
        <dbReference type="Rhea" id="RHEA:21096"/>
        <dbReference type="ChEBI" id="CHEBI:15377"/>
        <dbReference type="ChEBI" id="CHEBI:16630"/>
        <dbReference type="ChEBI" id="CHEBI:32364"/>
        <dbReference type="EC" id="4.2.1.10"/>
    </reaction>
</comment>
<comment type="pathway">
    <text evidence="1">Metabolic intermediate biosynthesis; chorismate biosynthesis; chorismate from D-erythrose 4-phosphate and phosphoenolpyruvate: step 3/7.</text>
</comment>
<comment type="subunit">
    <text evidence="1">Homododecamer.</text>
</comment>
<comment type="similarity">
    <text evidence="1">Belongs to the type-II 3-dehydroquinase family.</text>
</comment>
<accession>B1GZJ3</accession>
<dbReference type="EC" id="4.2.1.10" evidence="1"/>
<dbReference type="EMBL" id="AP009510">
    <property type="protein sequence ID" value="BAG13675.1"/>
    <property type="molecule type" value="Genomic_DNA"/>
</dbReference>
<dbReference type="RefSeq" id="WP_015423203.1">
    <property type="nucleotide sequence ID" value="NC_020419.1"/>
</dbReference>
<dbReference type="SMR" id="B1GZJ3"/>
<dbReference type="STRING" id="471821.TGRD_192"/>
<dbReference type="KEGG" id="rsd:TGRD_192"/>
<dbReference type="PATRIC" id="fig|471821.5.peg.292"/>
<dbReference type="HOGENOM" id="CLU_090968_2_0_0"/>
<dbReference type="UniPathway" id="UPA00053">
    <property type="reaction ID" value="UER00086"/>
</dbReference>
<dbReference type="Proteomes" id="UP000001691">
    <property type="component" value="Chromosome"/>
</dbReference>
<dbReference type="GO" id="GO:0003855">
    <property type="term" value="F:3-dehydroquinate dehydratase activity"/>
    <property type="evidence" value="ECO:0007669"/>
    <property type="project" value="UniProtKB-UniRule"/>
</dbReference>
<dbReference type="GO" id="GO:0008652">
    <property type="term" value="P:amino acid biosynthetic process"/>
    <property type="evidence" value="ECO:0007669"/>
    <property type="project" value="UniProtKB-KW"/>
</dbReference>
<dbReference type="GO" id="GO:0009073">
    <property type="term" value="P:aromatic amino acid family biosynthetic process"/>
    <property type="evidence" value="ECO:0007669"/>
    <property type="project" value="UniProtKB-KW"/>
</dbReference>
<dbReference type="GO" id="GO:0009423">
    <property type="term" value="P:chorismate biosynthetic process"/>
    <property type="evidence" value="ECO:0007669"/>
    <property type="project" value="UniProtKB-UniRule"/>
</dbReference>
<dbReference type="GO" id="GO:0019631">
    <property type="term" value="P:quinate catabolic process"/>
    <property type="evidence" value="ECO:0007669"/>
    <property type="project" value="TreeGrafter"/>
</dbReference>
<dbReference type="CDD" id="cd00466">
    <property type="entry name" value="DHQase_II"/>
    <property type="match status" value="1"/>
</dbReference>
<dbReference type="Gene3D" id="3.40.50.9100">
    <property type="entry name" value="Dehydroquinase, class II"/>
    <property type="match status" value="1"/>
</dbReference>
<dbReference type="HAMAP" id="MF_00169">
    <property type="entry name" value="AroQ"/>
    <property type="match status" value="1"/>
</dbReference>
<dbReference type="InterPro" id="IPR001874">
    <property type="entry name" value="DHquinase_II"/>
</dbReference>
<dbReference type="InterPro" id="IPR018509">
    <property type="entry name" value="DHquinase_II_CS"/>
</dbReference>
<dbReference type="InterPro" id="IPR036441">
    <property type="entry name" value="DHquinase_II_sf"/>
</dbReference>
<dbReference type="NCBIfam" id="TIGR01088">
    <property type="entry name" value="aroQ"/>
    <property type="match status" value="1"/>
</dbReference>
<dbReference type="NCBIfam" id="NF003804">
    <property type="entry name" value="PRK05395.1-1"/>
    <property type="match status" value="1"/>
</dbReference>
<dbReference type="NCBIfam" id="NF003805">
    <property type="entry name" value="PRK05395.1-2"/>
    <property type="match status" value="1"/>
</dbReference>
<dbReference type="NCBIfam" id="NF003806">
    <property type="entry name" value="PRK05395.1-3"/>
    <property type="match status" value="1"/>
</dbReference>
<dbReference type="NCBIfam" id="NF003807">
    <property type="entry name" value="PRK05395.1-4"/>
    <property type="match status" value="1"/>
</dbReference>
<dbReference type="PANTHER" id="PTHR21272">
    <property type="entry name" value="CATABOLIC 3-DEHYDROQUINASE"/>
    <property type="match status" value="1"/>
</dbReference>
<dbReference type="PANTHER" id="PTHR21272:SF3">
    <property type="entry name" value="CATABOLIC 3-DEHYDROQUINASE"/>
    <property type="match status" value="1"/>
</dbReference>
<dbReference type="Pfam" id="PF01220">
    <property type="entry name" value="DHquinase_II"/>
    <property type="match status" value="1"/>
</dbReference>
<dbReference type="PIRSF" id="PIRSF001399">
    <property type="entry name" value="DHquinase_II"/>
    <property type="match status" value="1"/>
</dbReference>
<dbReference type="SUPFAM" id="SSF52304">
    <property type="entry name" value="Type II 3-dehydroquinate dehydratase"/>
    <property type="match status" value="1"/>
</dbReference>
<dbReference type="PROSITE" id="PS01029">
    <property type="entry name" value="DEHYDROQUINASE_II"/>
    <property type="match status" value="1"/>
</dbReference>
<protein>
    <recommendedName>
        <fullName evidence="1">3-dehydroquinate dehydratase</fullName>
        <shortName evidence="1">3-dehydroquinase</shortName>
        <ecNumber evidence="1">4.2.1.10</ecNumber>
    </recommendedName>
    <alternativeName>
        <fullName evidence="1">Type II DHQase</fullName>
    </alternativeName>
</protein>
<sequence>MKKILVLNGPNINMLGIREPAVYGNITLAEIEKSLSSLAKELKVEVEFFQSNHEGKIVDKIQDSINKIFGIIINPAALTHTSITIRDALSSISVPTIEVHISNIYAREEFRHKSYIAAEAIGQIAGLGIDGYLFALRKMVSLM</sequence>
<proteinExistence type="inferred from homology"/>
<keyword id="KW-0028">Amino-acid biosynthesis</keyword>
<keyword id="KW-0057">Aromatic amino acid biosynthesis</keyword>
<keyword id="KW-0456">Lyase</keyword>